<gene>
    <name evidence="1" type="primary">coaX</name>
    <name type="ordered locus">Amuc_0974</name>
</gene>
<dbReference type="EC" id="2.7.1.33" evidence="1"/>
<dbReference type="EMBL" id="CP001071">
    <property type="protein sequence ID" value="ACD04806.1"/>
    <property type="molecule type" value="Genomic_DNA"/>
</dbReference>
<dbReference type="RefSeq" id="WP_012420021.1">
    <property type="nucleotide sequence ID" value="NZ_CP071807.1"/>
</dbReference>
<dbReference type="SMR" id="B2UQS1"/>
<dbReference type="STRING" id="349741.Amuc_0974"/>
<dbReference type="PaxDb" id="349741-Amuc_0974"/>
<dbReference type="KEGG" id="amu:Amuc_0974"/>
<dbReference type="eggNOG" id="COG1521">
    <property type="taxonomic scope" value="Bacteria"/>
</dbReference>
<dbReference type="HOGENOM" id="CLU_066627_1_0_0"/>
<dbReference type="OrthoDB" id="9804707at2"/>
<dbReference type="BioCyc" id="AMUC349741:G1GBX-1047-MONOMER"/>
<dbReference type="UniPathway" id="UPA00241">
    <property type="reaction ID" value="UER00352"/>
</dbReference>
<dbReference type="Proteomes" id="UP000001031">
    <property type="component" value="Chromosome"/>
</dbReference>
<dbReference type="GO" id="GO:0005737">
    <property type="term" value="C:cytoplasm"/>
    <property type="evidence" value="ECO:0007669"/>
    <property type="project" value="UniProtKB-SubCell"/>
</dbReference>
<dbReference type="GO" id="GO:0005524">
    <property type="term" value="F:ATP binding"/>
    <property type="evidence" value="ECO:0007669"/>
    <property type="project" value="UniProtKB-UniRule"/>
</dbReference>
<dbReference type="GO" id="GO:0046872">
    <property type="term" value="F:metal ion binding"/>
    <property type="evidence" value="ECO:0007669"/>
    <property type="project" value="UniProtKB-KW"/>
</dbReference>
<dbReference type="GO" id="GO:0004594">
    <property type="term" value="F:pantothenate kinase activity"/>
    <property type="evidence" value="ECO:0007669"/>
    <property type="project" value="UniProtKB-UniRule"/>
</dbReference>
<dbReference type="GO" id="GO:0015937">
    <property type="term" value="P:coenzyme A biosynthetic process"/>
    <property type="evidence" value="ECO:0007669"/>
    <property type="project" value="UniProtKB-UniRule"/>
</dbReference>
<dbReference type="CDD" id="cd24015">
    <property type="entry name" value="ASKHA_NBD_PanK-III"/>
    <property type="match status" value="1"/>
</dbReference>
<dbReference type="Gene3D" id="3.30.420.40">
    <property type="match status" value="2"/>
</dbReference>
<dbReference type="HAMAP" id="MF_01274">
    <property type="entry name" value="Pantothen_kinase_3"/>
    <property type="match status" value="1"/>
</dbReference>
<dbReference type="InterPro" id="IPR043129">
    <property type="entry name" value="ATPase_NBD"/>
</dbReference>
<dbReference type="InterPro" id="IPR004619">
    <property type="entry name" value="Type_III_PanK"/>
</dbReference>
<dbReference type="NCBIfam" id="TIGR00671">
    <property type="entry name" value="baf"/>
    <property type="match status" value="1"/>
</dbReference>
<dbReference type="PANTHER" id="PTHR34265">
    <property type="entry name" value="TYPE III PANTOTHENATE KINASE"/>
    <property type="match status" value="1"/>
</dbReference>
<dbReference type="PANTHER" id="PTHR34265:SF1">
    <property type="entry name" value="TYPE III PANTOTHENATE KINASE"/>
    <property type="match status" value="1"/>
</dbReference>
<dbReference type="Pfam" id="PF03309">
    <property type="entry name" value="Pan_kinase"/>
    <property type="match status" value="1"/>
</dbReference>
<dbReference type="SUPFAM" id="SSF53067">
    <property type="entry name" value="Actin-like ATPase domain"/>
    <property type="match status" value="2"/>
</dbReference>
<name>COAX_AKKM8</name>
<reference key="1">
    <citation type="journal article" date="2011" name="PLoS ONE">
        <title>The genome of Akkermansia muciniphila, a dedicated intestinal mucin degrader, and its use in exploring intestinal metagenomes.</title>
        <authorList>
            <person name="van Passel M.W."/>
            <person name="Kant R."/>
            <person name="Zoetendal E.G."/>
            <person name="Plugge C.M."/>
            <person name="Derrien M."/>
            <person name="Malfatti S.A."/>
            <person name="Chain P.S."/>
            <person name="Woyke T."/>
            <person name="Palva A."/>
            <person name="de Vos W.M."/>
            <person name="Smidt H."/>
        </authorList>
    </citation>
    <scope>NUCLEOTIDE SEQUENCE [LARGE SCALE GENOMIC DNA]</scope>
    <source>
        <strain>ATCC BAA-835 / DSM 22959 / JCM 33894 / BCRC 81048 / CCUG 64013 / CIP 107961 / Muc</strain>
    </source>
</reference>
<keyword id="KW-0067">ATP-binding</keyword>
<keyword id="KW-0173">Coenzyme A biosynthesis</keyword>
<keyword id="KW-0963">Cytoplasm</keyword>
<keyword id="KW-0418">Kinase</keyword>
<keyword id="KW-0479">Metal-binding</keyword>
<keyword id="KW-0547">Nucleotide-binding</keyword>
<keyword id="KW-0630">Potassium</keyword>
<keyword id="KW-1185">Reference proteome</keyword>
<keyword id="KW-0808">Transferase</keyword>
<sequence length="242" mass="25877">MTYLLIDNSNTRTKFVLSSPEALLPERYMVPTREVSGERLDEVLAGVRYDAAVVCSVVPRVAEELKNWIVKPCHFLSCDSRLGVGIDYPHPRQIGADRLANAVGAAAYYGYPCVVVDFGTAVTFDVIGPQCTYMGGVIAPGLASMGDYLERNTALLPAIDPQEPSRVIGTSTVEAMQSGAVYGYRGLVKEILARLEGELGVRPAVVATGGDAALIARGVERIDHVDPDITLNGLRIAAGLNL</sequence>
<organism>
    <name type="scientific">Akkermansia muciniphila (strain ATCC BAA-835 / DSM 22959 / JCM 33894 / BCRC 81048 / CCUG 64013 / CIP 107961 / Muc)</name>
    <dbReference type="NCBI Taxonomy" id="349741"/>
    <lineage>
        <taxon>Bacteria</taxon>
        <taxon>Pseudomonadati</taxon>
        <taxon>Verrucomicrobiota</taxon>
        <taxon>Verrucomicrobiia</taxon>
        <taxon>Verrucomicrobiales</taxon>
        <taxon>Akkermansiaceae</taxon>
        <taxon>Akkermansia</taxon>
    </lineage>
</organism>
<evidence type="ECO:0000255" key="1">
    <source>
        <dbReference type="HAMAP-Rule" id="MF_01274"/>
    </source>
</evidence>
<proteinExistence type="inferred from homology"/>
<comment type="function">
    <text evidence="1">Catalyzes the phosphorylation of pantothenate (Pan), the first step in CoA biosynthesis.</text>
</comment>
<comment type="catalytic activity">
    <reaction evidence="1">
        <text>(R)-pantothenate + ATP = (R)-4'-phosphopantothenate + ADP + H(+)</text>
        <dbReference type="Rhea" id="RHEA:16373"/>
        <dbReference type="ChEBI" id="CHEBI:10986"/>
        <dbReference type="ChEBI" id="CHEBI:15378"/>
        <dbReference type="ChEBI" id="CHEBI:29032"/>
        <dbReference type="ChEBI" id="CHEBI:30616"/>
        <dbReference type="ChEBI" id="CHEBI:456216"/>
        <dbReference type="EC" id="2.7.1.33"/>
    </reaction>
</comment>
<comment type="cofactor">
    <cofactor evidence="1">
        <name>NH4(+)</name>
        <dbReference type="ChEBI" id="CHEBI:28938"/>
    </cofactor>
    <cofactor evidence="1">
        <name>K(+)</name>
        <dbReference type="ChEBI" id="CHEBI:29103"/>
    </cofactor>
    <text evidence="1">A monovalent cation. Ammonium or potassium.</text>
</comment>
<comment type="pathway">
    <text evidence="1">Cofactor biosynthesis; coenzyme A biosynthesis; CoA from (R)-pantothenate: step 1/5.</text>
</comment>
<comment type="subunit">
    <text evidence="1">Homodimer.</text>
</comment>
<comment type="subcellular location">
    <subcellularLocation>
        <location evidence="1">Cytoplasm</location>
    </subcellularLocation>
</comment>
<comment type="similarity">
    <text evidence="1">Belongs to the type III pantothenate kinase family.</text>
</comment>
<protein>
    <recommendedName>
        <fullName evidence="1">Type III pantothenate kinase</fullName>
        <ecNumber evidence="1">2.7.1.33</ecNumber>
    </recommendedName>
    <alternativeName>
        <fullName evidence="1">PanK-III</fullName>
    </alternativeName>
    <alternativeName>
        <fullName evidence="1">Pantothenic acid kinase</fullName>
    </alternativeName>
</protein>
<feature type="chain" id="PRO_1000140215" description="Type III pantothenate kinase">
    <location>
        <begin position="1"/>
        <end position="242"/>
    </location>
</feature>
<feature type="active site" description="Proton acceptor" evidence="1">
    <location>
        <position position="97"/>
    </location>
</feature>
<feature type="binding site" evidence="1">
    <location>
        <begin position="7"/>
        <end position="14"/>
    </location>
    <ligand>
        <name>ATP</name>
        <dbReference type="ChEBI" id="CHEBI:30616"/>
    </ligand>
</feature>
<feature type="binding site" evidence="1">
    <location>
        <position position="88"/>
    </location>
    <ligand>
        <name>substrate</name>
    </ligand>
</feature>
<feature type="binding site" evidence="1">
    <location>
        <begin position="95"/>
        <end position="98"/>
    </location>
    <ligand>
        <name>substrate</name>
    </ligand>
</feature>
<feature type="binding site" evidence="1">
    <location>
        <position position="117"/>
    </location>
    <ligand>
        <name>K(+)</name>
        <dbReference type="ChEBI" id="CHEBI:29103"/>
    </ligand>
</feature>
<feature type="binding site" evidence="1">
    <location>
        <position position="120"/>
    </location>
    <ligand>
        <name>ATP</name>
        <dbReference type="ChEBI" id="CHEBI:30616"/>
    </ligand>
</feature>
<feature type="binding site" evidence="1">
    <location>
        <position position="172"/>
    </location>
    <ligand>
        <name>substrate</name>
    </ligand>
</feature>
<accession>B2UQS1</accession>